<sequence length="224" mass="24512">MKTDRVSTGSTAFDDLLGGGLERRAITQIYGEPASGKSTLCLMAAVATLRAGNSVVYIDTEGFSVERFTQIAGENAGTLADRLYLFEPLDFAQQGTMIADAEGLLKNGHAPVGLLVMDSATALYRTELDLGREAIRKLSHHMIKLLGLAKKYDIPVLITNQIYMDVERDRVAGLGGTALEHLSKAIIRLEKKDSARRAMLRKHRSRPEGLSFDFTITEDGIRTV</sequence>
<feature type="chain" id="PRO_1000006934" description="DNA repair and recombination protein RadB">
    <location>
        <begin position="1"/>
        <end position="224"/>
    </location>
</feature>
<comment type="function">
    <text evidence="1">Involved in DNA repair and in homologous recombination. May regulate the cleavage reactions of the branch-structured DNA. Has a very weak ATPase activity that is not stimulated by DNA. Binds DNA but does not promote DNA strands exchange.</text>
</comment>
<comment type="similarity">
    <text evidence="1">Belongs to the eukaryotic RecA-like protein family. RadB subfamily.</text>
</comment>
<evidence type="ECO:0000255" key="1">
    <source>
        <dbReference type="HAMAP-Rule" id="MF_00350"/>
    </source>
</evidence>
<name>RADB_METMJ</name>
<proteinExistence type="inferred from homology"/>
<protein>
    <recommendedName>
        <fullName evidence="1">DNA repair and recombination protein RadB</fullName>
    </recommendedName>
</protein>
<reference key="1">
    <citation type="journal article" date="2009" name="Stand. Genomic Sci.">
        <title>Complete genome sequence of Methanoculleus marisnigri Romesser et al. 1981 type strain JR1.</title>
        <authorList>
            <person name="Anderson I.J."/>
            <person name="Sieprawska-Lupa M."/>
            <person name="Lapidus A."/>
            <person name="Nolan M."/>
            <person name="Copeland A."/>
            <person name="Glavina Del Rio T."/>
            <person name="Tice H."/>
            <person name="Dalin E."/>
            <person name="Barry K."/>
            <person name="Saunders E."/>
            <person name="Han C."/>
            <person name="Brettin T."/>
            <person name="Detter J.C."/>
            <person name="Bruce D."/>
            <person name="Mikhailova N."/>
            <person name="Pitluck S."/>
            <person name="Hauser L."/>
            <person name="Land M."/>
            <person name="Lucas S."/>
            <person name="Richardson P."/>
            <person name="Whitman W.B."/>
            <person name="Kyrpides N.C."/>
        </authorList>
    </citation>
    <scope>NUCLEOTIDE SEQUENCE [LARGE SCALE GENOMIC DNA]</scope>
    <source>
        <strain>ATCC 35101 / DSM 1498 / JR1</strain>
    </source>
</reference>
<organism>
    <name type="scientific">Methanoculleus marisnigri (strain ATCC 35101 / DSM 1498 / JR1)</name>
    <dbReference type="NCBI Taxonomy" id="368407"/>
    <lineage>
        <taxon>Archaea</taxon>
        <taxon>Methanobacteriati</taxon>
        <taxon>Methanobacteriota</taxon>
        <taxon>Stenosarchaea group</taxon>
        <taxon>Methanomicrobia</taxon>
        <taxon>Methanomicrobiales</taxon>
        <taxon>Methanomicrobiaceae</taxon>
        <taxon>Methanoculleus</taxon>
    </lineage>
</organism>
<gene>
    <name evidence="1" type="primary">radB</name>
    <name type="ordered locus">Memar_2159</name>
</gene>
<accession>A3CXI2</accession>
<dbReference type="EMBL" id="CP000562">
    <property type="protein sequence ID" value="ABN58082.1"/>
    <property type="molecule type" value="Genomic_DNA"/>
</dbReference>
<dbReference type="RefSeq" id="WP_011844991.1">
    <property type="nucleotide sequence ID" value="NC_009051.1"/>
</dbReference>
<dbReference type="SMR" id="A3CXI2"/>
<dbReference type="STRING" id="368407.Memar_2159"/>
<dbReference type="GeneID" id="4845992"/>
<dbReference type="GeneID" id="76730242"/>
<dbReference type="KEGG" id="mem:Memar_2159"/>
<dbReference type="eggNOG" id="arCOG00417">
    <property type="taxonomic scope" value="Archaea"/>
</dbReference>
<dbReference type="HOGENOM" id="CLU_041732_2_0_2"/>
<dbReference type="OrthoDB" id="17644at2157"/>
<dbReference type="Proteomes" id="UP000002146">
    <property type="component" value="Chromosome"/>
</dbReference>
<dbReference type="GO" id="GO:0005524">
    <property type="term" value="F:ATP binding"/>
    <property type="evidence" value="ECO:0007669"/>
    <property type="project" value="UniProtKB-UniRule"/>
</dbReference>
<dbReference type="GO" id="GO:0016887">
    <property type="term" value="F:ATP hydrolysis activity"/>
    <property type="evidence" value="ECO:0007669"/>
    <property type="project" value="InterPro"/>
</dbReference>
<dbReference type="GO" id="GO:0140664">
    <property type="term" value="F:ATP-dependent DNA damage sensor activity"/>
    <property type="evidence" value="ECO:0007669"/>
    <property type="project" value="InterPro"/>
</dbReference>
<dbReference type="GO" id="GO:0003684">
    <property type="term" value="F:damaged DNA binding"/>
    <property type="evidence" value="ECO:0007669"/>
    <property type="project" value="UniProtKB-UniRule"/>
</dbReference>
<dbReference type="GO" id="GO:0006310">
    <property type="term" value="P:DNA recombination"/>
    <property type="evidence" value="ECO:0007669"/>
    <property type="project" value="UniProtKB-UniRule"/>
</dbReference>
<dbReference type="GO" id="GO:0006281">
    <property type="term" value="P:DNA repair"/>
    <property type="evidence" value="ECO:0007669"/>
    <property type="project" value="UniProtKB-UniRule"/>
</dbReference>
<dbReference type="CDD" id="cd01394">
    <property type="entry name" value="archRadB"/>
    <property type="match status" value="1"/>
</dbReference>
<dbReference type="Gene3D" id="3.40.50.300">
    <property type="entry name" value="P-loop containing nucleotide triphosphate hydrolases"/>
    <property type="match status" value="1"/>
</dbReference>
<dbReference type="HAMAP" id="MF_00350">
    <property type="entry name" value="RadB"/>
    <property type="match status" value="1"/>
</dbReference>
<dbReference type="InterPro" id="IPR003593">
    <property type="entry name" value="AAA+_ATPase"/>
</dbReference>
<dbReference type="InterPro" id="IPR013632">
    <property type="entry name" value="DNA_recomb/repair_Rad51_C"/>
</dbReference>
<dbReference type="InterPro" id="IPR011939">
    <property type="entry name" value="DNA_repair_and_recomb_RadB"/>
</dbReference>
<dbReference type="InterPro" id="IPR027417">
    <property type="entry name" value="P-loop_NTPase"/>
</dbReference>
<dbReference type="InterPro" id="IPR020588">
    <property type="entry name" value="RecA_ATP-bd"/>
</dbReference>
<dbReference type="NCBIfam" id="TIGR02237">
    <property type="entry name" value="recomb_radB"/>
    <property type="match status" value="1"/>
</dbReference>
<dbReference type="PANTHER" id="PTHR22942:SF47">
    <property type="entry name" value="DNA REPAIR AND RECOMBINATION PROTEIN RADB"/>
    <property type="match status" value="1"/>
</dbReference>
<dbReference type="PANTHER" id="PTHR22942">
    <property type="entry name" value="RECA/RAD51/RADA DNA STRAND-PAIRING FAMILY MEMBER"/>
    <property type="match status" value="1"/>
</dbReference>
<dbReference type="Pfam" id="PF08423">
    <property type="entry name" value="Rad51"/>
    <property type="match status" value="1"/>
</dbReference>
<dbReference type="PIRSF" id="PIRSF003336">
    <property type="entry name" value="RadB"/>
    <property type="match status" value="1"/>
</dbReference>
<dbReference type="SMART" id="SM00382">
    <property type="entry name" value="AAA"/>
    <property type="match status" value="1"/>
</dbReference>
<dbReference type="SUPFAM" id="SSF52540">
    <property type="entry name" value="P-loop containing nucleoside triphosphate hydrolases"/>
    <property type="match status" value="1"/>
</dbReference>
<dbReference type="PROSITE" id="PS50162">
    <property type="entry name" value="RECA_2"/>
    <property type="match status" value="1"/>
</dbReference>
<keyword id="KW-0067">ATP-binding</keyword>
<keyword id="KW-0227">DNA damage</keyword>
<keyword id="KW-0233">DNA recombination</keyword>
<keyword id="KW-0238">DNA-binding</keyword>
<keyword id="KW-0547">Nucleotide-binding</keyword>